<proteinExistence type="evidence at transcript level"/>
<organism>
    <name type="scientific">Rattus norvegicus</name>
    <name type="common">Rat</name>
    <dbReference type="NCBI Taxonomy" id="10116"/>
    <lineage>
        <taxon>Eukaryota</taxon>
        <taxon>Metazoa</taxon>
        <taxon>Chordata</taxon>
        <taxon>Craniata</taxon>
        <taxon>Vertebrata</taxon>
        <taxon>Euteleostomi</taxon>
        <taxon>Mammalia</taxon>
        <taxon>Eutheria</taxon>
        <taxon>Euarchontoglires</taxon>
        <taxon>Glires</taxon>
        <taxon>Rodentia</taxon>
        <taxon>Myomorpha</taxon>
        <taxon>Muroidea</taxon>
        <taxon>Muridae</taxon>
        <taxon>Murinae</taxon>
        <taxon>Rattus</taxon>
    </lineage>
</organism>
<protein>
    <recommendedName>
        <fullName evidence="6">Persephin</fullName>
        <shortName evidence="6">PSP</shortName>
    </recommendedName>
</protein>
<feature type="signal peptide" evidence="3">
    <location>
        <begin position="1"/>
        <end position="21"/>
    </location>
</feature>
<feature type="chain" id="PRO_0000034016" description="Persephin">
    <location>
        <begin position="22"/>
        <end position="156"/>
    </location>
</feature>
<feature type="disulfide bond" evidence="2">
    <location>
        <begin position="66"/>
        <end position="124"/>
    </location>
</feature>
<feature type="disulfide bond" evidence="2">
    <location>
        <begin position="93"/>
        <end position="152"/>
    </location>
</feature>
<feature type="disulfide bond" evidence="2">
    <location>
        <begin position="97"/>
        <end position="154"/>
    </location>
</feature>
<feature type="disulfide bond" description="Interchain" evidence="2">
    <location>
        <position position="123"/>
    </location>
</feature>
<accession>O70301</accession>
<reference key="1">
    <citation type="journal article" date="1998" name="Neuron">
        <title>Persephin, a novel neurotrophic factor related to GDNF and neurturin.</title>
        <authorList>
            <person name="Milbrandt J."/>
            <person name="de Sauvage F.J."/>
            <person name="Fahrner T.J."/>
            <person name="Baloh R.H."/>
            <person name="Leitner M.L."/>
            <person name="Tansey M.G."/>
            <person name="Lampe P.A."/>
            <person name="Heuckeroth R.O."/>
            <person name="Kotzbauer P.T."/>
            <person name="Simburger K.S."/>
            <person name="Golden J.P."/>
            <person name="Davies J.A."/>
            <person name="Vejsada R."/>
            <person name="Kato A.C."/>
            <person name="Hynes M."/>
            <person name="Sherman D."/>
            <person name="Nishimura M."/>
            <person name="Wang L.-C."/>
            <person name="Vandlen R."/>
            <person name="Moffat B."/>
            <person name="Klein R.D."/>
            <person name="Poulsen K."/>
            <person name="Gray C."/>
            <person name="Garces A."/>
            <person name="Henderson C.E."/>
            <person name="Phillips H.S."/>
            <person name="Johnson E.M."/>
        </authorList>
    </citation>
    <scope>NUCLEOTIDE SEQUENCE [MRNA]</scope>
</reference>
<reference key="2">
    <citation type="journal article" date="1998" name="J. Neurosci. Res.">
        <title>GDNF-related factor persephin is widely distributed throughout the nervous system.</title>
        <authorList>
            <person name="Jaszai J."/>
            <person name="Farkas L.M."/>
            <person name="Galter D."/>
            <person name="Reuss B."/>
            <person name="Strelau J."/>
            <person name="Unsicker K."/>
            <person name="Krieglstein K."/>
        </authorList>
    </citation>
    <scope>NUCLEOTIDE SEQUENCE [GENOMIC DNA] OF 1-78</scope>
    <scope>TISSUE SPECIFICITY</scope>
    <source>
        <strain>Sprague-Dawley</strain>
        <tissue>Pons</tissue>
    </source>
</reference>
<reference key="3">
    <citation type="journal article" date="2000" name="Brain Res. Mol. Brain Res.">
        <title>Expression of the GDNF family members and their receptors in the mature rat cochlea.</title>
        <authorList>
            <person name="Stoever T."/>
            <person name="Gong T.-W.L."/>
            <person name="Cho Y."/>
            <person name="Altschuler R.A."/>
            <person name="Lomax M.I."/>
        </authorList>
    </citation>
    <scope>TISSUE SPECIFICITY</scope>
</reference>
<gene>
    <name evidence="8" type="primary">Pspn</name>
</gene>
<evidence type="ECO:0000250" key="1">
    <source>
        <dbReference type="UniProtKB" id="O60542"/>
    </source>
</evidence>
<evidence type="ECO:0000250" key="2">
    <source>
        <dbReference type="UniProtKB" id="Q5T4W7"/>
    </source>
</evidence>
<evidence type="ECO:0000255" key="3"/>
<evidence type="ECO:0000269" key="4">
    <source>
    </source>
</evidence>
<evidence type="ECO:0000269" key="5">
    <source>
    </source>
</evidence>
<evidence type="ECO:0000303" key="6">
    <source>
    </source>
</evidence>
<evidence type="ECO:0000305" key="7"/>
<evidence type="ECO:0000312" key="8">
    <source>
        <dbReference type="RGD" id="3432"/>
    </source>
</evidence>
<dbReference type="EMBL" id="AF040961">
    <property type="protein sequence ID" value="AAC40058.1"/>
    <property type="molecule type" value="mRNA"/>
</dbReference>
<dbReference type="EMBL" id="AJ005169">
    <property type="protein sequence ID" value="CAA06410.1"/>
    <property type="molecule type" value="Genomic_DNA"/>
</dbReference>
<dbReference type="RefSeq" id="NP_037146.1">
    <property type="nucleotide sequence ID" value="NM_013014.3"/>
</dbReference>
<dbReference type="RefSeq" id="XP_063122766.1">
    <property type="nucleotide sequence ID" value="XM_063266696.1"/>
</dbReference>
<dbReference type="SMR" id="O70301"/>
<dbReference type="FunCoup" id="O70301">
    <property type="interactions" value="293"/>
</dbReference>
<dbReference type="STRING" id="10116.ENSRNOP00000065156"/>
<dbReference type="PhosphoSitePlus" id="O70301"/>
<dbReference type="PaxDb" id="10116-ENSRNOP00000065156"/>
<dbReference type="Ensembl" id="ENSRNOT00000114711.1">
    <property type="protein sequence ID" value="ENSRNOP00000077509.1"/>
    <property type="gene ID" value="ENSRNOG00000071190.1"/>
</dbReference>
<dbReference type="GeneID" id="25525"/>
<dbReference type="KEGG" id="rno:25525"/>
<dbReference type="AGR" id="RGD:3432"/>
<dbReference type="CTD" id="5623"/>
<dbReference type="RGD" id="3432">
    <property type="gene designation" value="Pspn"/>
</dbReference>
<dbReference type="eggNOG" id="ENOG502S9IE">
    <property type="taxonomic scope" value="Eukaryota"/>
</dbReference>
<dbReference type="GeneTree" id="ENSGT00950000182993"/>
<dbReference type="HOGENOM" id="CLU_102221_2_0_1"/>
<dbReference type="InParanoid" id="O70301"/>
<dbReference type="OMA" id="WHNAPCC"/>
<dbReference type="OrthoDB" id="9936891at2759"/>
<dbReference type="PhylomeDB" id="O70301"/>
<dbReference type="Reactome" id="R-RNO-5673001">
    <property type="pathway name" value="RAF/MAP kinase cascade"/>
</dbReference>
<dbReference type="Reactome" id="R-RNO-8853659">
    <property type="pathway name" value="RET signaling"/>
</dbReference>
<dbReference type="PRO" id="PR:O70301"/>
<dbReference type="Proteomes" id="UP000002494">
    <property type="component" value="Chromosome 9"/>
</dbReference>
<dbReference type="Bgee" id="ENSRNOG00000049171">
    <property type="expression patterns" value="Expressed in cerebellum and 19 other cell types or tissues"/>
</dbReference>
<dbReference type="GO" id="GO:0005615">
    <property type="term" value="C:extracellular space"/>
    <property type="evidence" value="ECO:0000250"/>
    <property type="project" value="UniProtKB"/>
</dbReference>
<dbReference type="GO" id="GO:0030116">
    <property type="term" value="F:glial cell-derived neurotrophic factor receptor binding"/>
    <property type="evidence" value="ECO:0007669"/>
    <property type="project" value="InterPro"/>
</dbReference>
<dbReference type="GO" id="GO:0008083">
    <property type="term" value="F:growth factor activity"/>
    <property type="evidence" value="ECO:0000250"/>
    <property type="project" value="UniProtKB"/>
</dbReference>
<dbReference type="GO" id="GO:0030971">
    <property type="term" value="F:receptor tyrosine kinase binding"/>
    <property type="evidence" value="ECO:0007669"/>
    <property type="project" value="InterPro"/>
</dbReference>
<dbReference type="GO" id="GO:0001658">
    <property type="term" value="P:branching involved in ureteric bud morphogenesis"/>
    <property type="evidence" value="ECO:0000266"/>
    <property type="project" value="RGD"/>
</dbReference>
<dbReference type="GO" id="GO:0035860">
    <property type="term" value="P:glial cell-derived neurotrophic factor receptor signaling pathway"/>
    <property type="evidence" value="ECO:0000250"/>
    <property type="project" value="UniProtKB"/>
</dbReference>
<dbReference type="GO" id="GO:0007422">
    <property type="term" value="P:peripheral nervous system development"/>
    <property type="evidence" value="ECO:0000318"/>
    <property type="project" value="GO_Central"/>
</dbReference>
<dbReference type="CDD" id="cd19382">
    <property type="entry name" value="TGF_beta_Persephin"/>
    <property type="match status" value="1"/>
</dbReference>
<dbReference type="FunFam" id="2.10.90.10:FF:000040">
    <property type="entry name" value="Persephin"/>
    <property type="match status" value="1"/>
</dbReference>
<dbReference type="Gene3D" id="2.10.90.10">
    <property type="entry name" value="Cystine-knot cytokines"/>
    <property type="match status" value="1"/>
</dbReference>
<dbReference type="InterPro" id="IPR029034">
    <property type="entry name" value="Cystine-knot_cytokine"/>
</dbReference>
<dbReference type="InterPro" id="IPR043401">
    <property type="entry name" value="GDNF_fam"/>
</dbReference>
<dbReference type="InterPro" id="IPR001839">
    <property type="entry name" value="TGF-b_C"/>
</dbReference>
<dbReference type="PANTHER" id="PTHR12173">
    <property type="entry name" value="GDNF SUBFAMILY OF TGF-BETA FAMILY"/>
    <property type="match status" value="1"/>
</dbReference>
<dbReference type="PANTHER" id="PTHR12173:SF8">
    <property type="entry name" value="PERSEPHIN"/>
    <property type="match status" value="1"/>
</dbReference>
<dbReference type="Pfam" id="PF00019">
    <property type="entry name" value="TGF_beta"/>
    <property type="match status" value="1"/>
</dbReference>
<dbReference type="SUPFAM" id="SSF57501">
    <property type="entry name" value="Cystine-knot cytokines"/>
    <property type="match status" value="1"/>
</dbReference>
<dbReference type="PROSITE" id="PS51362">
    <property type="entry name" value="TGF_BETA_2"/>
    <property type="match status" value="1"/>
</dbReference>
<name>PSPN_RAT</name>
<comment type="function">
    <text evidence="1">Growth factor that exhibits neurotrophic activity on mesencephalic dopaminergic and motor neurons (By similarity). Acts by binding to its coreceptor, GFRA4, leading to autophosphorylation and activation of the RET receptor (By similarity).</text>
</comment>
<comment type="subunit">
    <text evidence="1 2">Homodimer; disulfide-linked (By similarity). Interacts with GFRA4 coreceptor and RET: forms a 2:2:2 ternary complex composed of PSPN ligand, GFRA4 and RET receptor (By similarity).</text>
</comment>
<comment type="subcellular location">
    <subcellularLocation>
        <location evidence="1">Secreted</location>
    </subcellularLocation>
</comment>
<comment type="tissue specificity">
    <text evidence="4 5">Expressed at low levels in substantia nigra (PubMed:9710270). Cochlea (PubMed:10719212).</text>
</comment>
<comment type="similarity">
    <text evidence="7">Belongs to the TGF-beta family. GDNF subfamily.</text>
</comment>
<sequence>MAAGRLRILFLLLLSLHLGLGWVLDLQEAPAADELSSGKMAETGRTWKPHQGNNNVRLPRALPGLCRLWSLTLPVAELGLGYASEEKIIFRYCAGSCPQEVRTQHSLVLARLRGQGRAHGRPCCQPTSYADVTFLDDHHHWQQLPQLSAAACGCGG</sequence>
<keyword id="KW-1015">Disulfide bond</keyword>
<keyword id="KW-0339">Growth factor</keyword>
<keyword id="KW-1185">Reference proteome</keyword>
<keyword id="KW-0964">Secreted</keyword>
<keyword id="KW-0732">Signal</keyword>